<sequence>MFDPESLKKLAIEIVKKSIEAVFPDRAVKETLPKLNLDRVILVAVGKAAWRMAKAAYEVLGKKIRKGVVVTKYGHSEGPIDDFEIYEAGHPVPDENTIKTTRRVLELVDQLNENDTVLFLLSGGGSSLFELPLEGVSLEEIQKLTSALLKSGASIEEINTVRKHLSQVKGGRFAERVFPAKVVALVLSDVLGDRLDVIASGPAWPDSSTSEDALKVLEKYGIETSESVKRAILQETPKHLSNVEIHLIGNVQKVCDEAKSLAKEKGFNAEIITTSLDCEAREAGRFIASIMKEVKFKDRPLKKPAALIFGGETVVHVKGNGIGGRNQELALSAAIALEGIEGVILCSAGTDGTDGPTDAAGGIVDGSTAKTLKAMGEDPYQYLKNNDSYNALKKSGALLITGPTGTNVNDLIIGLIV</sequence>
<dbReference type="EC" id="2.7.1.165"/>
<dbReference type="EMBL" id="AE000512">
    <property type="protein sequence ID" value="AAD36652.1"/>
    <property type="molecule type" value="Genomic_DNA"/>
</dbReference>
<dbReference type="EMBL" id="CP004077">
    <property type="protein sequence ID" value="AGL50517.1"/>
    <property type="molecule type" value="Genomic_DNA"/>
</dbReference>
<dbReference type="EMBL" id="CP007013">
    <property type="protein sequence ID" value="AHD18518.1"/>
    <property type="molecule type" value="Genomic_DNA"/>
</dbReference>
<dbReference type="PIR" id="A72236">
    <property type="entry name" value="A72236"/>
</dbReference>
<dbReference type="RefSeq" id="NP_229385.1">
    <property type="nucleotide sequence ID" value="NC_000853.1"/>
</dbReference>
<dbReference type="RefSeq" id="WP_004082016.1">
    <property type="nucleotide sequence ID" value="NC_000853.1"/>
</dbReference>
<dbReference type="PDB" id="2B8N">
    <property type="method" value="X-ray"/>
    <property type="resolution" value="2.53 A"/>
    <property type="chains" value="A/B=1-417"/>
</dbReference>
<dbReference type="PDBsum" id="2B8N"/>
<dbReference type="SMR" id="Q9X1S1"/>
<dbReference type="STRING" id="243274.TM_1585"/>
<dbReference type="PaxDb" id="243274-THEMA_06355"/>
<dbReference type="EnsemblBacteria" id="AAD36652">
    <property type="protein sequence ID" value="AAD36652"/>
    <property type="gene ID" value="TM_1585"/>
</dbReference>
<dbReference type="KEGG" id="tma:TM1585"/>
<dbReference type="KEGG" id="tmi:THEMA_06355"/>
<dbReference type="KEGG" id="tmm:Tmari_1593"/>
<dbReference type="KEGG" id="tmw:THMA_1620"/>
<dbReference type="PATRIC" id="fig|243274.17.peg.1593"/>
<dbReference type="eggNOG" id="COG2379">
    <property type="taxonomic scope" value="Bacteria"/>
</dbReference>
<dbReference type="InParanoid" id="Q9X1S1"/>
<dbReference type="OrthoDB" id="9766552at2"/>
<dbReference type="BRENDA" id="2.7.1.165">
    <property type="organism ID" value="6331"/>
</dbReference>
<dbReference type="SABIO-RK" id="Q9X1S1"/>
<dbReference type="EvolutionaryTrace" id="Q9X1S1"/>
<dbReference type="Proteomes" id="UP000008183">
    <property type="component" value="Chromosome"/>
</dbReference>
<dbReference type="GO" id="GO:0005737">
    <property type="term" value="C:cytoplasm"/>
    <property type="evidence" value="ECO:0000318"/>
    <property type="project" value="GO_Central"/>
</dbReference>
<dbReference type="GO" id="GO:0005524">
    <property type="term" value="F:ATP binding"/>
    <property type="evidence" value="ECO:0007669"/>
    <property type="project" value="UniProtKB-KW"/>
</dbReference>
<dbReference type="GO" id="GO:0043798">
    <property type="term" value="F:glycerate 2-kinase activity"/>
    <property type="evidence" value="ECO:0007669"/>
    <property type="project" value="UniProtKB-EC"/>
</dbReference>
<dbReference type="GO" id="GO:0008887">
    <property type="term" value="F:glycerate kinase activity"/>
    <property type="evidence" value="ECO:0000318"/>
    <property type="project" value="GO_Central"/>
</dbReference>
<dbReference type="GO" id="GO:0000287">
    <property type="term" value="F:magnesium ion binding"/>
    <property type="evidence" value="ECO:0000314"/>
    <property type="project" value="UniProtKB"/>
</dbReference>
<dbReference type="GO" id="GO:0016773">
    <property type="term" value="F:phosphotransferase activity, alcohol group as acceptor"/>
    <property type="evidence" value="ECO:0000314"/>
    <property type="project" value="UniProtKB"/>
</dbReference>
<dbReference type="FunFam" id="3.40.1480.10:FF:000003">
    <property type="entry name" value="D-glycerate 2-kinase"/>
    <property type="match status" value="1"/>
</dbReference>
<dbReference type="FunFam" id="3.40.50.10180:FF:000001">
    <property type="entry name" value="Glycerate kinase"/>
    <property type="match status" value="1"/>
</dbReference>
<dbReference type="Gene3D" id="3.40.50.10180">
    <property type="entry name" value="Glycerate kinase, MOFRL-like N-terminal domain"/>
    <property type="match status" value="1"/>
</dbReference>
<dbReference type="Gene3D" id="3.40.1480.10">
    <property type="entry name" value="MOFRL domain"/>
    <property type="match status" value="1"/>
</dbReference>
<dbReference type="InterPro" id="IPR037035">
    <property type="entry name" value="GK-like_C_sf"/>
</dbReference>
<dbReference type="InterPro" id="IPR038614">
    <property type="entry name" value="GK_N_sf"/>
</dbReference>
<dbReference type="InterPro" id="IPR007835">
    <property type="entry name" value="MOFRL"/>
</dbReference>
<dbReference type="InterPro" id="IPR025286">
    <property type="entry name" value="MOFRL_assoc_dom"/>
</dbReference>
<dbReference type="InterPro" id="IPR039760">
    <property type="entry name" value="MOFRL_protein"/>
</dbReference>
<dbReference type="PANTHER" id="PTHR12227">
    <property type="entry name" value="GLYCERATE KINASE"/>
    <property type="match status" value="1"/>
</dbReference>
<dbReference type="PANTHER" id="PTHR12227:SF0">
    <property type="entry name" value="GLYCERATE KINASE"/>
    <property type="match status" value="1"/>
</dbReference>
<dbReference type="Pfam" id="PF13660">
    <property type="entry name" value="DUF4147"/>
    <property type="match status" value="1"/>
</dbReference>
<dbReference type="Pfam" id="PF05161">
    <property type="entry name" value="MOFRL"/>
    <property type="match status" value="1"/>
</dbReference>
<dbReference type="SUPFAM" id="SSF82544">
    <property type="entry name" value="GckA/TtuD-like"/>
    <property type="match status" value="1"/>
</dbReference>
<protein>
    <recommendedName>
        <fullName>D-glycerate 2-kinase</fullName>
        <shortName>GCK</shortName>
        <ecNumber>2.7.1.165</ecNumber>
    </recommendedName>
</protein>
<organism>
    <name type="scientific">Thermotoga maritima (strain ATCC 43589 / DSM 3109 / JCM 10099 / NBRC 100826 / MSB8)</name>
    <dbReference type="NCBI Taxonomy" id="243274"/>
    <lineage>
        <taxon>Bacteria</taxon>
        <taxon>Thermotogati</taxon>
        <taxon>Thermotogota</taxon>
        <taxon>Thermotogae</taxon>
        <taxon>Thermotogales</taxon>
        <taxon>Thermotogaceae</taxon>
        <taxon>Thermotoga</taxon>
    </lineage>
</organism>
<keyword id="KW-0002">3D-structure</keyword>
<keyword id="KW-0067">ATP-binding</keyword>
<keyword id="KW-0418">Kinase</keyword>
<keyword id="KW-0547">Nucleotide-binding</keyword>
<keyword id="KW-1185">Reference proteome</keyword>
<keyword id="KW-0808">Transferase</keyword>
<proteinExistence type="evidence at protein level"/>
<reference key="1">
    <citation type="journal article" date="1999" name="Nature">
        <title>Evidence for lateral gene transfer between Archaea and Bacteria from genome sequence of Thermotoga maritima.</title>
        <authorList>
            <person name="Nelson K.E."/>
            <person name="Clayton R.A."/>
            <person name="Gill S.R."/>
            <person name="Gwinn M.L."/>
            <person name="Dodson R.J."/>
            <person name="Haft D.H."/>
            <person name="Hickey E.K."/>
            <person name="Peterson J.D."/>
            <person name="Nelson W.C."/>
            <person name="Ketchum K.A."/>
            <person name="McDonald L.A."/>
            <person name="Utterback T.R."/>
            <person name="Malek J.A."/>
            <person name="Linher K.D."/>
            <person name="Garrett M.M."/>
            <person name="Stewart A.M."/>
            <person name="Cotton M.D."/>
            <person name="Pratt M.S."/>
            <person name="Phillips C.A."/>
            <person name="Richardson D.L."/>
            <person name="Heidelberg J.F."/>
            <person name="Sutton G.G."/>
            <person name="Fleischmann R.D."/>
            <person name="Eisen J.A."/>
            <person name="White O."/>
            <person name="Salzberg S.L."/>
            <person name="Smith H.O."/>
            <person name="Venter J.C."/>
            <person name="Fraser C.M."/>
        </authorList>
    </citation>
    <scope>NUCLEOTIDE SEQUENCE [LARGE SCALE GENOMIC DNA]</scope>
    <source>
        <strain>ATCC 43589 / DSM 3109 / JCM 10099 / NBRC 100826 / MSB8</strain>
    </source>
</reference>
<reference key="2">
    <citation type="journal article" date="2013" name="PLoS Genet.">
        <title>The genome organization of Thermotoga maritima reflects its lifestyle.</title>
        <authorList>
            <person name="Latif H."/>
            <person name="Lerman J.A."/>
            <person name="Portnoy V.A."/>
            <person name="Tarasova Y."/>
            <person name="Nagarajan H."/>
            <person name="Schrimpe-Rutledge A.C."/>
            <person name="Smith R.D."/>
            <person name="Adkins J.N."/>
            <person name="Lee D.H."/>
            <person name="Qiu Y."/>
            <person name="Zengler K."/>
        </authorList>
    </citation>
    <scope>NUCLEOTIDE SEQUENCE [LARGE SCALE GENOMIC DNA]</scope>
    <source>
        <strain>ATCC 43589 / DSM 3109 / JCM 10099 / NBRC 100826 / MSB8</strain>
    </source>
</reference>
<reference key="3">
    <citation type="submission" date="2013-12" db="EMBL/GenBank/DDBJ databases">
        <authorList>
            <consortium name="DOE Joint Genome Institute"/>
            <person name="Noll K.M."/>
            <person name="Huntemann M."/>
            <person name="Han J."/>
            <person name="Chen A."/>
            <person name="Kyrpides N."/>
            <person name="Mavromatis K."/>
            <person name="Markowitz V."/>
            <person name="Palaniappan K."/>
            <person name="Ivanova N."/>
            <person name="Schaumberg A."/>
            <person name="Pati A."/>
            <person name="Liolios K."/>
            <person name="Nordberg H.P."/>
            <person name="Cantor M.N."/>
            <person name="Hua S.X."/>
            <person name="Woyke T."/>
        </authorList>
    </citation>
    <scope>NUCLEOTIDE SEQUENCE [LARGE SCALE GENOMIC DNA]</scope>
    <source>
        <strain>ATCC 43589 / DSM 3109 / JCM 10099 / NBRC 100826 / MSB8</strain>
    </source>
</reference>
<reference key="4">
    <citation type="journal article" date="2008" name="J. Bacteriol.">
        <title>Glycerate 2-kinase of Thermotoga maritima and genomic reconstruction of related metabolic pathways.</title>
        <authorList>
            <person name="Yang C."/>
            <person name="Rodionov D.A."/>
            <person name="Rodionova I.A."/>
            <person name="Li X."/>
            <person name="Osterman A.L."/>
        </authorList>
    </citation>
    <scope>FUNCTION</scope>
    <scope>CATALYTIC ACTIVITY</scope>
    <scope>COFACTOR</scope>
    <scope>MUTAGENESIS OF LYS-47 AND ARG-325</scope>
    <scope>BIOPHYSICOCHEMICAL PROPERTIES</scope>
    <scope>SUBUNIT</scope>
</reference>
<reference key="5">
    <citation type="journal article" date="2006" name="Proteins">
        <title>Crystal structure of a glycerate kinase (TM1585) from Thermotoga maritima at 2.70 A resolution reveals a new fold.</title>
        <authorList>
            <person name="Schwarzenbacher R."/>
            <person name="McMullan D."/>
            <person name="Krishna S.S."/>
            <person name="Xu Q."/>
            <person name="Miller M.D."/>
            <person name="Canaves J.M."/>
            <person name="Elsliger M.A."/>
            <person name="Floyd R."/>
            <person name="Grzechnik S.K."/>
            <person name="Jaroszewski L."/>
            <person name="Klock H.E."/>
            <person name="Koesema E."/>
            <person name="Kovarik J.S."/>
            <person name="Kreusch A."/>
            <person name="Kuhn P."/>
            <person name="McPhillips T.M."/>
            <person name="Morse A.T."/>
            <person name="Quijano K."/>
            <person name="Spraggon G."/>
            <person name="Stevens R.C."/>
            <person name="van den Bedem H."/>
            <person name="Wolf G."/>
            <person name="Hodgson K.O."/>
            <person name="Wooley J."/>
            <person name="Deacon A.M."/>
            <person name="Godzik A."/>
            <person name="Lesley S.A."/>
            <person name="Wilson I.A."/>
        </authorList>
    </citation>
    <scope>X-RAY CRYSTALLOGRAPHY (2.53 ANGSTROMS)</scope>
    <scope>SUBUNIT</scope>
</reference>
<comment type="function">
    <text evidence="2">Involved in the degradation of serine via 3-hydroxypyruvate. Catalyzes the ATP-dependent phosphorylation of D-glycerate to 2-phosphoglycerate.</text>
</comment>
<comment type="catalytic activity">
    <reaction evidence="2">
        <text>(R)-glycerate + ATP = (2R)-2-phosphoglycerate + ADP + H(+)</text>
        <dbReference type="Rhea" id="RHEA:27377"/>
        <dbReference type="ChEBI" id="CHEBI:15378"/>
        <dbReference type="ChEBI" id="CHEBI:16659"/>
        <dbReference type="ChEBI" id="CHEBI:30616"/>
        <dbReference type="ChEBI" id="CHEBI:58289"/>
        <dbReference type="ChEBI" id="CHEBI:456216"/>
        <dbReference type="EC" id="2.7.1.165"/>
    </reaction>
</comment>
<comment type="cofactor">
    <cofactor evidence="2">
        <name>Mg(2+)</name>
        <dbReference type="ChEBI" id="CHEBI:18420"/>
    </cofactor>
</comment>
<comment type="biophysicochemical properties">
    <kinetics>
        <KM evidence="2">0.095 mM for ATP</KM>
        <KM evidence="2">0.15 mM for D-glycerate</KM>
        <text>kcat is 14.4 sec(-1) for phosphorylation of D-glycerate.</text>
    </kinetics>
</comment>
<comment type="subunit">
    <text evidence="1 2">Homodimer.</text>
</comment>
<comment type="similarity">
    <text evidence="3">Belongs to the glycerate kinase type-1 family.</text>
</comment>
<evidence type="ECO:0000269" key="1">
    <source>
    </source>
</evidence>
<evidence type="ECO:0000269" key="2">
    <source>
    </source>
</evidence>
<evidence type="ECO:0000305" key="3"/>
<evidence type="ECO:0007829" key="4">
    <source>
        <dbReference type="PDB" id="2B8N"/>
    </source>
</evidence>
<name>GCK_THEMA</name>
<feature type="chain" id="PRO_0000428994" description="D-glycerate 2-kinase">
    <location>
        <begin position="1"/>
        <end position="417"/>
    </location>
</feature>
<feature type="mutagenesis site" description="Very low residual kinase activity." evidence="2">
    <original>K</original>
    <variation>A</variation>
    <location>
        <position position="47"/>
    </location>
</feature>
<feature type="mutagenesis site" description="Significant decrease of the kinase activity with a 180-fold decrease of catalytic efficiency." evidence="2">
    <original>K</original>
    <variation>R</variation>
    <location>
        <position position="47"/>
    </location>
</feature>
<feature type="mutagenesis site" description="Significant decrease of the kinase activity with a 17-fold decrease of catalytic efficiency." evidence="2">
    <original>R</original>
    <variation>A</variation>
    <variation>K</variation>
    <location>
        <position position="325"/>
    </location>
</feature>
<feature type="helix" evidence="4">
    <location>
        <begin position="5"/>
        <end position="20"/>
    </location>
</feature>
<feature type="helix" evidence="4">
    <location>
        <begin position="24"/>
        <end position="29"/>
    </location>
</feature>
<feature type="helix" evidence="4">
    <location>
        <begin position="32"/>
        <end position="35"/>
    </location>
</feature>
<feature type="strand" evidence="4">
    <location>
        <begin position="39"/>
        <end position="46"/>
    </location>
</feature>
<feature type="helix" evidence="4">
    <location>
        <begin position="49"/>
        <end position="60"/>
    </location>
</feature>
<feature type="helix" evidence="4">
    <location>
        <begin position="61"/>
        <end position="63"/>
    </location>
</feature>
<feature type="strand" evidence="4">
    <location>
        <begin position="64"/>
        <end position="72"/>
    </location>
</feature>
<feature type="strand" evidence="4">
    <location>
        <begin position="84"/>
        <end position="88"/>
    </location>
</feature>
<feature type="strand" evidence="4">
    <location>
        <begin position="90"/>
        <end position="92"/>
    </location>
</feature>
<feature type="helix" evidence="4">
    <location>
        <begin position="95"/>
        <end position="108"/>
    </location>
</feature>
<feature type="strand" evidence="4">
    <location>
        <begin position="116"/>
        <end position="121"/>
    </location>
</feature>
<feature type="helix" evidence="4">
    <location>
        <begin position="125"/>
        <end position="128"/>
    </location>
</feature>
<feature type="helix" evidence="4">
    <location>
        <begin position="138"/>
        <end position="150"/>
    </location>
</feature>
<feature type="helix" evidence="4">
    <location>
        <begin position="155"/>
        <end position="163"/>
    </location>
</feature>
<feature type="strand" evidence="4">
    <location>
        <begin position="166"/>
        <end position="168"/>
    </location>
</feature>
<feature type="turn" evidence="4">
    <location>
        <begin position="169"/>
        <end position="171"/>
    </location>
</feature>
<feature type="helix" evidence="4">
    <location>
        <begin position="172"/>
        <end position="177"/>
    </location>
</feature>
<feature type="strand" evidence="4">
    <location>
        <begin position="180"/>
        <end position="187"/>
    </location>
</feature>
<feature type="turn" evidence="4">
    <location>
        <begin position="195"/>
        <end position="197"/>
    </location>
</feature>
<feature type="helix" evidence="4">
    <location>
        <begin position="198"/>
        <end position="200"/>
    </location>
</feature>
<feature type="helix" evidence="4">
    <location>
        <begin position="210"/>
        <end position="219"/>
    </location>
</feature>
<feature type="helix" evidence="4">
    <location>
        <begin position="226"/>
        <end position="232"/>
    </location>
</feature>
<feature type="strand" evidence="4">
    <location>
        <begin position="241"/>
        <end position="249"/>
    </location>
</feature>
<feature type="helix" evidence="4">
    <location>
        <begin position="251"/>
        <end position="264"/>
    </location>
</feature>
<feature type="strand" evidence="4">
    <location>
        <begin position="268"/>
        <end position="276"/>
    </location>
</feature>
<feature type="helix" evidence="4">
    <location>
        <begin position="280"/>
        <end position="297"/>
    </location>
</feature>
<feature type="strand" evidence="4">
    <location>
        <begin position="303"/>
        <end position="311"/>
    </location>
</feature>
<feature type="helix" evidence="4">
    <location>
        <begin position="325"/>
        <end position="336"/>
    </location>
</feature>
<feature type="turn" evidence="4">
    <location>
        <begin position="337"/>
        <end position="339"/>
    </location>
</feature>
<feature type="strand" evidence="4">
    <location>
        <begin position="343"/>
        <end position="349"/>
    </location>
</feature>
<feature type="strand" evidence="4">
    <location>
        <begin position="355"/>
        <end position="358"/>
    </location>
</feature>
<feature type="strand" evidence="4">
    <location>
        <begin position="361"/>
        <end position="365"/>
    </location>
</feature>
<feature type="helix" evidence="4">
    <location>
        <begin position="368"/>
        <end position="374"/>
    </location>
</feature>
<feature type="helix" evidence="4">
    <location>
        <begin position="379"/>
        <end position="384"/>
    </location>
</feature>
<feature type="helix" evidence="4">
    <location>
        <begin position="388"/>
        <end position="394"/>
    </location>
</feature>
<feature type="strand" evidence="4">
    <location>
        <begin position="410"/>
        <end position="416"/>
    </location>
</feature>
<accession>Q9X1S1</accession>
<accession>G4FFX3</accession>
<gene>
    <name type="ordered locus">TM_1585</name>
    <name type="ORF">THEMA_06355</name>
    <name type="ORF">Tmari_1593</name>
</gene>